<organism>
    <name type="scientific">Gromphadorhina portentosa</name>
    <name type="common">Madagascan hissing cockroach</name>
    <dbReference type="NCBI Taxonomy" id="36953"/>
    <lineage>
        <taxon>Eukaryota</taxon>
        <taxon>Metazoa</taxon>
        <taxon>Ecdysozoa</taxon>
        <taxon>Arthropoda</taxon>
        <taxon>Hexapoda</taxon>
        <taxon>Insecta</taxon>
        <taxon>Pterygota</taxon>
        <taxon>Neoptera</taxon>
        <taxon>Polyneoptera</taxon>
        <taxon>Dictyoptera</taxon>
        <taxon>Blattodea</taxon>
        <taxon>Blaberoidea</taxon>
        <taxon>Blaberidae</taxon>
        <taxon>Oxyhaloinae</taxon>
        <taxon>Gromphadorhina</taxon>
    </lineage>
</organism>
<name>PVK3_GROPO</name>
<proteinExistence type="evidence at protein level"/>
<accession>P83935</accession>
<accession>P82700</accession>
<feature type="peptide" id="PRO_0000044286" description="Periviscerokinin-3">
    <location>
        <begin position="1"/>
        <end position="11"/>
    </location>
</feature>
<feature type="modified residue" description="Valine amide" evidence="1 2">
    <location>
        <position position="11"/>
    </location>
</feature>
<evidence type="ECO:0000269" key="1">
    <source>
    </source>
</evidence>
<evidence type="ECO:0000269" key="2">
    <source>
    </source>
</evidence>
<evidence type="ECO:0000305" key="3"/>
<keyword id="KW-0027">Amidation</keyword>
<keyword id="KW-0903">Direct protein sequencing</keyword>
<keyword id="KW-0527">Neuropeptide</keyword>
<keyword id="KW-0964">Secreted</keyword>
<comment type="function">
    <text evidence="1">Mediates visceral muscle contractile activity (myotropic activity).</text>
</comment>
<comment type="subcellular location">
    <subcellularLocation>
        <location>Secreted</location>
    </subcellularLocation>
</comment>
<comment type="mass spectrometry"/>
<comment type="similarity">
    <text evidence="3">Belongs to the periviscerokinin family.</text>
</comment>
<protein>
    <recommendedName>
        <fullName>Periviscerokinin-3</fullName>
        <shortName>GroPo-PVK-3</shortName>
        <shortName>PVK-3</shortName>
    </recommendedName>
</protein>
<reference key="1">
    <citation type="journal article" date="2000" name="Eur. J. Biochem.">
        <title>Identification of novel periviscerokinins from single neurohaemal release sites in insects. MS/MS fragmentation complemented by Edman degradation.</title>
        <authorList>
            <person name="Predel R."/>
            <person name="Kellner R."/>
            <person name="Baggerman G."/>
            <person name="Steinmetzer T."/>
            <person name="Schoofs L."/>
        </authorList>
    </citation>
    <scope>PROTEIN SEQUENCE</scope>
    <scope>FUNCTION</scope>
    <scope>MASS SPECTROMETRY</scope>
    <scope>AMIDATION AT VAL-11</scope>
    <source>
        <tissue>Abdominal perisympathetic organs</tissue>
    </source>
</reference>
<reference key="2">
    <citation type="journal article" date="2009" name="BMC Evol. Biol.">
        <title>A proteomic approach for studying insect phylogeny: CAPA peptides of ancient insect taxa (Dictyoptera, Blattoptera) as a test case.</title>
        <authorList>
            <person name="Roth S."/>
            <person name="Fromm B."/>
            <person name="Gaede G."/>
            <person name="Predel R."/>
        </authorList>
    </citation>
    <scope>PROTEIN SEQUENCE</scope>
    <scope>AMIDATION AT VAL-11</scope>
    <source>
        <tissue>Abdominal perisympathetic organs</tissue>
    </source>
</reference>
<dbReference type="GO" id="GO:0005576">
    <property type="term" value="C:extracellular region"/>
    <property type="evidence" value="ECO:0007669"/>
    <property type="project" value="UniProtKB-SubCell"/>
</dbReference>
<dbReference type="GO" id="GO:0007218">
    <property type="term" value="P:neuropeptide signaling pathway"/>
    <property type="evidence" value="ECO:0007669"/>
    <property type="project" value="UniProtKB-KW"/>
</dbReference>
<dbReference type="InterPro" id="IPR013231">
    <property type="entry name" value="Periviscerokinin"/>
</dbReference>
<dbReference type="Pfam" id="PF08259">
    <property type="entry name" value="Periviscerokin"/>
    <property type="match status" value="1"/>
</dbReference>
<sequence>GSSGMIPFPRV</sequence>